<gene>
    <name type="primary">Nol11</name>
</gene>
<evidence type="ECO:0000250" key="1">
    <source>
        <dbReference type="UniProtKB" id="Q9H8H0"/>
    </source>
</evidence>
<evidence type="ECO:0000256" key="2">
    <source>
        <dbReference type="SAM" id="MobiDB-lite"/>
    </source>
</evidence>
<evidence type="ECO:0000303" key="3">
    <source>
    </source>
</evidence>
<evidence type="ECO:0000305" key="4"/>
<accession>Q8BJW5</accession>
<accession>Q8BGJ1</accession>
<accession>Q8R3Q3</accession>
<accession>Q99KA5</accession>
<sequence>MATLEEEFTLSTGVLGAGPEGFLGVEQTDKADQFLVTDSGRTVVLYKVSDQKPLGSWSVKQGQSITCPAVCNFQTGEYIMVHDHKVLRIWNNDDVNVDKVFKATLSAEVHRIHSVQRTEPLVLFRGGAARGLEALLVEPQQNIESVIPDEEVIVWSEVFMLFKQPVLIFITENHGHYYAYVRLCKSHSLSKYTLLLEKEEKSVKPNFTARVDGKFISLVSLSSDGCIYETLIPIYSSDTEQNQRLVRALMLKSVVSGGVRNGVALTILDQDHIAVLGPPLSASKECLSIWNIKFQTLQTSKELPQGTSGQLWYHGEVLFMLHGKSLTVIPYKCEESSLAGALGKLKHTQESGTHSVPHFVNWETCSGYELGSSGAEQSRTLRRKKVETNLQPEVPGFKQLLSIIKKDSEKHIEVELRKFLAKSTPAFHTIIGDLVAGLVGRCKAEPSFYPRNCLTQLIQTHVLSYSLCPDLMEIALEHTDVQMLQLCLQQFPDIPESTTCACLKLFLSVGDDCLRDSNINMESVFDYSDSTQDEKKEMEEQIEIVQNGFGPEDGNCSEDSQQLNDKPADTAHEPGSFPVTSCPVAPKRAALLNAVLHSAYSEPFLLPHLKDIPAKHVTLFLQYLYFLYLKCTGSATMTLPGVNPPTVSQIMDWICLLLDANFTVLLMIPEAKRLLLILYNFVKSQISIYSELNKIAVSFRELQRLNREKSSRGLYSIEVLELF</sequence>
<protein>
    <recommendedName>
        <fullName>Nucleolar protein 11</fullName>
    </recommendedName>
</protein>
<proteinExistence type="evidence at transcript level"/>
<feature type="chain" id="PRO_0000096932" description="Nucleolar protein 11">
    <location>
        <begin position="1"/>
        <end position="723"/>
    </location>
</feature>
<feature type="region of interest" description="Disordered" evidence="2">
    <location>
        <begin position="549"/>
        <end position="572"/>
    </location>
</feature>
<feature type="modified residue" description="N6-methyllysine" evidence="1">
    <location>
        <position position="346"/>
    </location>
</feature>
<feature type="splice variant" id="VSP_015459" description="In isoform 2." evidence="3">
    <location>
        <begin position="508"/>
        <end position="527"/>
    </location>
</feature>
<feature type="sequence conflict" description="In Ref. 2; AAH24874." evidence="4" ref="2">
    <original>S</original>
    <variation>A</variation>
    <location>
        <position position="145"/>
    </location>
</feature>
<feature type="sequence conflict" description="In Ref. 2; AAH24874." evidence="4" ref="2">
    <original>V</original>
    <variation>T</variation>
    <location>
        <position position="154"/>
    </location>
</feature>
<feature type="sequence conflict" description="In Ref. 2; AAH04785/AAH24874." evidence="4" ref="2">
    <original>V</original>
    <variation>E</variation>
    <location>
        <position position="462"/>
    </location>
</feature>
<feature type="sequence conflict" description="In Ref. 2; AAH24874." evidence="4" ref="2">
    <original>E</original>
    <variation>K</variation>
    <location>
        <position position="522"/>
    </location>
</feature>
<feature type="sequence conflict" description="In Ref. 2; AAH04785/AAH24874." evidence="4" ref="2">
    <original>D</original>
    <variation>N</variation>
    <location>
        <position position="565"/>
    </location>
</feature>
<keyword id="KW-0010">Activator</keyword>
<keyword id="KW-0025">Alternative splicing</keyword>
<keyword id="KW-0488">Methylation</keyword>
<keyword id="KW-0539">Nucleus</keyword>
<keyword id="KW-1185">Reference proteome</keyword>
<keyword id="KW-0690">Ribosome biogenesis</keyword>
<keyword id="KW-0698">rRNA processing</keyword>
<keyword id="KW-0804">Transcription</keyword>
<keyword id="KW-0805">Transcription regulation</keyword>
<reference key="1">
    <citation type="journal article" date="2005" name="Science">
        <title>The transcriptional landscape of the mammalian genome.</title>
        <authorList>
            <person name="Carninci P."/>
            <person name="Kasukawa T."/>
            <person name="Katayama S."/>
            <person name="Gough J."/>
            <person name="Frith M.C."/>
            <person name="Maeda N."/>
            <person name="Oyama R."/>
            <person name="Ravasi T."/>
            <person name="Lenhard B."/>
            <person name="Wells C."/>
            <person name="Kodzius R."/>
            <person name="Shimokawa K."/>
            <person name="Bajic V.B."/>
            <person name="Brenner S.E."/>
            <person name="Batalov S."/>
            <person name="Forrest A.R."/>
            <person name="Zavolan M."/>
            <person name="Davis M.J."/>
            <person name="Wilming L.G."/>
            <person name="Aidinis V."/>
            <person name="Allen J.E."/>
            <person name="Ambesi-Impiombato A."/>
            <person name="Apweiler R."/>
            <person name="Aturaliya R.N."/>
            <person name="Bailey T.L."/>
            <person name="Bansal M."/>
            <person name="Baxter L."/>
            <person name="Beisel K.W."/>
            <person name="Bersano T."/>
            <person name="Bono H."/>
            <person name="Chalk A.M."/>
            <person name="Chiu K.P."/>
            <person name="Choudhary V."/>
            <person name="Christoffels A."/>
            <person name="Clutterbuck D.R."/>
            <person name="Crowe M.L."/>
            <person name="Dalla E."/>
            <person name="Dalrymple B.P."/>
            <person name="de Bono B."/>
            <person name="Della Gatta G."/>
            <person name="di Bernardo D."/>
            <person name="Down T."/>
            <person name="Engstrom P."/>
            <person name="Fagiolini M."/>
            <person name="Faulkner G."/>
            <person name="Fletcher C.F."/>
            <person name="Fukushima T."/>
            <person name="Furuno M."/>
            <person name="Futaki S."/>
            <person name="Gariboldi M."/>
            <person name="Georgii-Hemming P."/>
            <person name="Gingeras T.R."/>
            <person name="Gojobori T."/>
            <person name="Green R.E."/>
            <person name="Gustincich S."/>
            <person name="Harbers M."/>
            <person name="Hayashi Y."/>
            <person name="Hensch T.K."/>
            <person name="Hirokawa N."/>
            <person name="Hill D."/>
            <person name="Huminiecki L."/>
            <person name="Iacono M."/>
            <person name="Ikeo K."/>
            <person name="Iwama A."/>
            <person name="Ishikawa T."/>
            <person name="Jakt M."/>
            <person name="Kanapin A."/>
            <person name="Katoh M."/>
            <person name="Kawasawa Y."/>
            <person name="Kelso J."/>
            <person name="Kitamura H."/>
            <person name="Kitano H."/>
            <person name="Kollias G."/>
            <person name="Krishnan S.P."/>
            <person name="Kruger A."/>
            <person name="Kummerfeld S.K."/>
            <person name="Kurochkin I.V."/>
            <person name="Lareau L.F."/>
            <person name="Lazarevic D."/>
            <person name="Lipovich L."/>
            <person name="Liu J."/>
            <person name="Liuni S."/>
            <person name="McWilliam S."/>
            <person name="Madan Babu M."/>
            <person name="Madera M."/>
            <person name="Marchionni L."/>
            <person name="Matsuda H."/>
            <person name="Matsuzawa S."/>
            <person name="Miki H."/>
            <person name="Mignone F."/>
            <person name="Miyake S."/>
            <person name="Morris K."/>
            <person name="Mottagui-Tabar S."/>
            <person name="Mulder N."/>
            <person name="Nakano N."/>
            <person name="Nakauchi H."/>
            <person name="Ng P."/>
            <person name="Nilsson R."/>
            <person name="Nishiguchi S."/>
            <person name="Nishikawa S."/>
            <person name="Nori F."/>
            <person name="Ohara O."/>
            <person name="Okazaki Y."/>
            <person name="Orlando V."/>
            <person name="Pang K.C."/>
            <person name="Pavan W.J."/>
            <person name="Pavesi G."/>
            <person name="Pesole G."/>
            <person name="Petrovsky N."/>
            <person name="Piazza S."/>
            <person name="Reed J."/>
            <person name="Reid J.F."/>
            <person name="Ring B.Z."/>
            <person name="Ringwald M."/>
            <person name="Rost B."/>
            <person name="Ruan Y."/>
            <person name="Salzberg S.L."/>
            <person name="Sandelin A."/>
            <person name="Schneider C."/>
            <person name="Schoenbach C."/>
            <person name="Sekiguchi K."/>
            <person name="Semple C.A."/>
            <person name="Seno S."/>
            <person name="Sessa L."/>
            <person name="Sheng Y."/>
            <person name="Shibata Y."/>
            <person name="Shimada H."/>
            <person name="Shimada K."/>
            <person name="Silva D."/>
            <person name="Sinclair B."/>
            <person name="Sperling S."/>
            <person name="Stupka E."/>
            <person name="Sugiura K."/>
            <person name="Sultana R."/>
            <person name="Takenaka Y."/>
            <person name="Taki K."/>
            <person name="Tammoja K."/>
            <person name="Tan S.L."/>
            <person name="Tang S."/>
            <person name="Taylor M.S."/>
            <person name="Tegner J."/>
            <person name="Teichmann S.A."/>
            <person name="Ueda H.R."/>
            <person name="van Nimwegen E."/>
            <person name="Verardo R."/>
            <person name="Wei C.L."/>
            <person name="Yagi K."/>
            <person name="Yamanishi H."/>
            <person name="Zabarovsky E."/>
            <person name="Zhu S."/>
            <person name="Zimmer A."/>
            <person name="Hide W."/>
            <person name="Bult C."/>
            <person name="Grimmond S.M."/>
            <person name="Teasdale R.D."/>
            <person name="Liu E.T."/>
            <person name="Brusic V."/>
            <person name="Quackenbush J."/>
            <person name="Wahlestedt C."/>
            <person name="Mattick J.S."/>
            <person name="Hume D.A."/>
            <person name="Kai C."/>
            <person name="Sasaki D."/>
            <person name="Tomaru Y."/>
            <person name="Fukuda S."/>
            <person name="Kanamori-Katayama M."/>
            <person name="Suzuki M."/>
            <person name="Aoki J."/>
            <person name="Arakawa T."/>
            <person name="Iida J."/>
            <person name="Imamura K."/>
            <person name="Itoh M."/>
            <person name="Kato T."/>
            <person name="Kawaji H."/>
            <person name="Kawagashira N."/>
            <person name="Kawashima T."/>
            <person name="Kojima M."/>
            <person name="Kondo S."/>
            <person name="Konno H."/>
            <person name="Nakano K."/>
            <person name="Ninomiya N."/>
            <person name="Nishio T."/>
            <person name="Okada M."/>
            <person name="Plessy C."/>
            <person name="Shibata K."/>
            <person name="Shiraki T."/>
            <person name="Suzuki S."/>
            <person name="Tagami M."/>
            <person name="Waki K."/>
            <person name="Watahiki A."/>
            <person name="Okamura-Oho Y."/>
            <person name="Suzuki H."/>
            <person name="Kawai J."/>
            <person name="Hayashizaki Y."/>
        </authorList>
    </citation>
    <scope>NUCLEOTIDE SEQUENCE [LARGE SCALE MRNA] (ISOFORMS 1 AND 2)</scope>
    <source>
        <strain>C57BL/6J</strain>
        <tissue>Hypothalamus</tissue>
        <tissue>Mesonephros</tissue>
        <tissue>Testis</tissue>
    </source>
</reference>
<reference key="2">
    <citation type="journal article" date="2004" name="Genome Res.">
        <title>The status, quality, and expansion of the NIH full-length cDNA project: the Mammalian Gene Collection (MGC).</title>
        <authorList>
            <consortium name="The MGC Project Team"/>
        </authorList>
    </citation>
    <scope>NUCLEOTIDE SEQUENCE [LARGE SCALE MRNA] (ISOFORM 1)</scope>
    <source>
        <strain>Czech II</strain>
        <tissue>Mammary tumor</tissue>
    </source>
</reference>
<name>NOL11_MOUSE</name>
<comment type="function">
    <text evidence="1">Ribosome biogenesis factor. May be required for both optimal rDNA transcription and small subunit (SSU) pre-rRNA processing at sites A', A0, 1 and 2b (By similarity).</text>
</comment>
<comment type="subunit">
    <text evidence="1">Interacts with UTP4. Interacts with FBL/fibrillarin in a transcription-dependent manner. May associate with the proposed t-UTP subcomplex of the SSU processome containing at least UTP4, WDR43, HEATR1, UTP15, WDR75.</text>
</comment>
<comment type="subcellular location">
    <subcellularLocation>
        <location evidence="1">Nucleus</location>
        <location evidence="1">Nucleolus</location>
    </subcellularLocation>
</comment>
<comment type="alternative products">
    <event type="alternative splicing"/>
    <isoform>
        <id>Q8BJW5-1</id>
        <name>1</name>
        <sequence type="displayed"/>
    </isoform>
    <isoform>
        <id>Q8BJW5-2</id>
        <name>2</name>
        <sequence type="described" ref="VSP_015459"/>
    </isoform>
</comment>
<comment type="miscellaneous">
    <molecule>Isoform 2</molecule>
    <text evidence="4">May be due to a competing acceptor splice site.</text>
</comment>
<organism>
    <name type="scientific">Mus musculus</name>
    <name type="common">Mouse</name>
    <dbReference type="NCBI Taxonomy" id="10090"/>
    <lineage>
        <taxon>Eukaryota</taxon>
        <taxon>Metazoa</taxon>
        <taxon>Chordata</taxon>
        <taxon>Craniata</taxon>
        <taxon>Vertebrata</taxon>
        <taxon>Euteleostomi</taxon>
        <taxon>Mammalia</taxon>
        <taxon>Eutheria</taxon>
        <taxon>Euarchontoglires</taxon>
        <taxon>Glires</taxon>
        <taxon>Rodentia</taxon>
        <taxon>Myomorpha</taxon>
        <taxon>Muroidea</taxon>
        <taxon>Muridae</taxon>
        <taxon>Murinae</taxon>
        <taxon>Mus</taxon>
        <taxon>Mus</taxon>
    </lineage>
</organism>
<dbReference type="EMBL" id="AK038696">
    <property type="protein sequence ID" value="BAC30102.1"/>
    <property type="molecule type" value="mRNA"/>
</dbReference>
<dbReference type="EMBL" id="AK076704">
    <property type="protein sequence ID" value="BAC36450.1"/>
    <property type="molecule type" value="mRNA"/>
</dbReference>
<dbReference type="EMBL" id="AK078524">
    <property type="protein sequence ID" value="BAC37323.1"/>
    <property type="molecule type" value="mRNA"/>
</dbReference>
<dbReference type="EMBL" id="BC004785">
    <property type="protein sequence ID" value="AAH04785.1"/>
    <property type="molecule type" value="mRNA"/>
</dbReference>
<dbReference type="EMBL" id="BC024874">
    <property type="protein sequence ID" value="AAH24874.1"/>
    <property type="molecule type" value="mRNA"/>
</dbReference>
<dbReference type="CCDS" id="CCDS25566.1">
    <molecule id="Q8BJW5-1"/>
</dbReference>
<dbReference type="CCDS" id="CCDS48965.1">
    <molecule id="Q8BJW5-2"/>
</dbReference>
<dbReference type="RefSeq" id="NP_001154801.1">
    <molecule id="Q8BJW5-2"/>
    <property type="nucleotide sequence ID" value="NM_001161329.2"/>
</dbReference>
<dbReference type="RefSeq" id="NP_598463.2">
    <molecule id="Q8BJW5-1"/>
    <property type="nucleotide sequence ID" value="NM_133702.3"/>
</dbReference>
<dbReference type="SMR" id="Q8BJW5"/>
<dbReference type="BioGRID" id="213155">
    <property type="interactions" value="2"/>
</dbReference>
<dbReference type="FunCoup" id="Q8BJW5">
    <property type="interactions" value="3368"/>
</dbReference>
<dbReference type="STRING" id="10090.ENSMUSP00000018577"/>
<dbReference type="PhosphoSitePlus" id="Q8BJW5"/>
<dbReference type="PaxDb" id="10090-ENSMUSP00000102368"/>
<dbReference type="PeptideAtlas" id="Q8BJW5"/>
<dbReference type="ProteomicsDB" id="293871">
    <molecule id="Q8BJW5-1"/>
</dbReference>
<dbReference type="ProteomicsDB" id="293872">
    <molecule id="Q8BJW5-2"/>
</dbReference>
<dbReference type="Pumba" id="Q8BJW5"/>
<dbReference type="Antibodypedia" id="19207">
    <property type="antibodies" value="32 antibodies from 17 providers"/>
</dbReference>
<dbReference type="DNASU" id="68979"/>
<dbReference type="Ensembl" id="ENSMUST00000018577.8">
    <molecule id="Q8BJW5-1"/>
    <property type="protein sequence ID" value="ENSMUSP00000018577.8"/>
    <property type="gene ID" value="ENSMUSG00000018433.15"/>
</dbReference>
<dbReference type="Ensembl" id="ENSMUST00000106757.8">
    <molecule id="Q8BJW5-2"/>
    <property type="protein sequence ID" value="ENSMUSP00000102368.2"/>
    <property type="gene ID" value="ENSMUSG00000018433.15"/>
</dbReference>
<dbReference type="GeneID" id="68979"/>
<dbReference type="KEGG" id="mmu:68979"/>
<dbReference type="UCSC" id="uc007mah.2">
    <molecule id="Q8BJW5-1"/>
    <property type="organism name" value="mouse"/>
</dbReference>
<dbReference type="UCSC" id="uc007maj.2">
    <molecule id="Q8BJW5-2"/>
    <property type="organism name" value="mouse"/>
</dbReference>
<dbReference type="AGR" id="MGI:1916229"/>
<dbReference type="CTD" id="25926"/>
<dbReference type="MGI" id="MGI:1916229">
    <property type="gene designation" value="Nol11"/>
</dbReference>
<dbReference type="VEuPathDB" id="HostDB:ENSMUSG00000018433"/>
<dbReference type="eggNOG" id="ENOG502SB74">
    <property type="taxonomic scope" value="Eukaryota"/>
</dbReference>
<dbReference type="GeneTree" id="ENSGT00390000009760"/>
<dbReference type="HOGENOM" id="CLU_025196_0_0_1"/>
<dbReference type="InParanoid" id="Q8BJW5"/>
<dbReference type="OMA" id="QGTTGQC"/>
<dbReference type="OrthoDB" id="6502630at2759"/>
<dbReference type="PhylomeDB" id="Q8BJW5"/>
<dbReference type="TreeFam" id="TF325877"/>
<dbReference type="Reactome" id="R-MMU-6791226">
    <property type="pathway name" value="Major pathway of rRNA processing in the nucleolus and cytosol"/>
</dbReference>
<dbReference type="BioGRID-ORCS" id="68979">
    <property type="hits" value="28 hits in 79 CRISPR screens"/>
</dbReference>
<dbReference type="ChiTaRS" id="Nol11">
    <property type="organism name" value="mouse"/>
</dbReference>
<dbReference type="PRO" id="PR:Q8BJW5"/>
<dbReference type="Proteomes" id="UP000000589">
    <property type="component" value="Chromosome 11"/>
</dbReference>
<dbReference type="RNAct" id="Q8BJW5">
    <property type="molecule type" value="protein"/>
</dbReference>
<dbReference type="Bgee" id="ENSMUSG00000018433">
    <property type="expression patterns" value="Expressed in dorsal pancreas and 257 other cell types or tissues"/>
</dbReference>
<dbReference type="GO" id="GO:0005730">
    <property type="term" value="C:nucleolus"/>
    <property type="evidence" value="ECO:0000250"/>
    <property type="project" value="UniProtKB"/>
</dbReference>
<dbReference type="GO" id="GO:0034455">
    <property type="term" value="C:t-UTP complex"/>
    <property type="evidence" value="ECO:0000250"/>
    <property type="project" value="UniProtKB"/>
</dbReference>
<dbReference type="GO" id="GO:0030490">
    <property type="term" value="P:maturation of SSU-rRNA"/>
    <property type="evidence" value="ECO:0000250"/>
    <property type="project" value="UniProtKB"/>
</dbReference>
<dbReference type="GO" id="GO:1901838">
    <property type="term" value="P:positive regulation of transcription of nucleolar large rRNA by RNA polymerase I"/>
    <property type="evidence" value="ECO:0000250"/>
    <property type="project" value="UniProtKB"/>
</dbReference>
<dbReference type="InterPro" id="IPR042859">
    <property type="entry name" value="NOL11"/>
</dbReference>
<dbReference type="InterPro" id="IPR048897">
    <property type="entry name" value="Nol11_C"/>
</dbReference>
<dbReference type="InterPro" id="IPR012584">
    <property type="entry name" value="NOL11_N"/>
</dbReference>
<dbReference type="PANTHER" id="PTHR15633">
    <property type="entry name" value="NUCLEOLAR PROTEIN 11"/>
    <property type="match status" value="1"/>
</dbReference>
<dbReference type="PANTHER" id="PTHR15633:SF2">
    <property type="entry name" value="NUCLEOLAR PROTEIN 11"/>
    <property type="match status" value="1"/>
</dbReference>
<dbReference type="Pfam" id="PF20998">
    <property type="entry name" value="Nol11_C"/>
    <property type="match status" value="1"/>
</dbReference>
<dbReference type="Pfam" id="PF08168">
    <property type="entry name" value="NOL11_N"/>
    <property type="match status" value="1"/>
</dbReference>